<reference key="1">
    <citation type="journal article" date="2003" name="Nature">
        <title>Genome sequence of Bacillus cereus and comparative analysis with Bacillus anthracis.</title>
        <authorList>
            <person name="Ivanova N."/>
            <person name="Sorokin A."/>
            <person name="Anderson I."/>
            <person name="Galleron N."/>
            <person name="Candelon B."/>
            <person name="Kapatral V."/>
            <person name="Bhattacharyya A."/>
            <person name="Reznik G."/>
            <person name="Mikhailova N."/>
            <person name="Lapidus A."/>
            <person name="Chu L."/>
            <person name="Mazur M."/>
            <person name="Goltsman E."/>
            <person name="Larsen N."/>
            <person name="D'Souza M."/>
            <person name="Walunas T."/>
            <person name="Grechkin Y."/>
            <person name="Pusch G."/>
            <person name="Haselkorn R."/>
            <person name="Fonstein M."/>
            <person name="Ehrlich S.D."/>
            <person name="Overbeek R."/>
            <person name="Kyrpides N.C."/>
        </authorList>
    </citation>
    <scope>NUCLEOTIDE SEQUENCE [LARGE SCALE GENOMIC DNA]</scope>
    <source>
        <strain>ATCC 14579 / DSM 31 / CCUG 7414 / JCM 2152 / NBRC 15305 / NCIMB 9373 / NCTC 2599 / NRRL B-3711</strain>
    </source>
</reference>
<organism>
    <name type="scientific">Bacillus cereus (strain ATCC 14579 / DSM 31 / CCUG 7414 / JCM 2152 / NBRC 15305 / NCIMB 9373 / NCTC 2599 / NRRL B-3711)</name>
    <dbReference type="NCBI Taxonomy" id="226900"/>
    <lineage>
        <taxon>Bacteria</taxon>
        <taxon>Bacillati</taxon>
        <taxon>Bacillota</taxon>
        <taxon>Bacilli</taxon>
        <taxon>Bacillales</taxon>
        <taxon>Bacillaceae</taxon>
        <taxon>Bacillus</taxon>
        <taxon>Bacillus cereus group</taxon>
    </lineage>
</organism>
<sequence>MKKIVFTGGGSAGHVTPNLAIIPYLQEDNWDISYIGSHQGIEKTIIEKEGIPYYSISSGKLRRYFDLKNIKDPFLVMKGVMDAYVRIRKLKPDVIFSKGGFVSVPVVIGGWLNRVPVLLHESDMTPGLANKIALRFASKIFVTFEEAAKHLPKEKVIYTGSPVREEVLKGNREKGLAFLGFSRKKPVITIMGGSLGAKKINETVRSALPELLKKYQIVHLCGKGNLDESLQNKEGYRQFEYVHGELPDILAVTDFVISRAGSNAIFEFLTLQKPMVLIPLSKFASRGDQILNAESFERQGYASVLYEEDVNVKSLIKYVEELSQNNEKYKTALKKYNGKEAIKTIIQNISEA</sequence>
<evidence type="ECO:0000255" key="1">
    <source>
        <dbReference type="HAMAP-Rule" id="MF_00033"/>
    </source>
</evidence>
<keyword id="KW-0131">Cell cycle</keyword>
<keyword id="KW-0132">Cell division</keyword>
<keyword id="KW-1003">Cell membrane</keyword>
<keyword id="KW-0133">Cell shape</keyword>
<keyword id="KW-0961">Cell wall biogenesis/degradation</keyword>
<keyword id="KW-0328">Glycosyltransferase</keyword>
<keyword id="KW-0472">Membrane</keyword>
<keyword id="KW-0573">Peptidoglycan synthesis</keyword>
<keyword id="KW-1185">Reference proteome</keyword>
<keyword id="KW-0808">Transferase</keyword>
<name>MURG2_BACCR</name>
<protein>
    <recommendedName>
        <fullName evidence="1">UDP-N-acetylglucosamine--N-acetylmuramyl-(pentapeptide) pyrophosphoryl-undecaprenol N-acetylglucosamine transferase 2</fullName>
        <ecNumber evidence="1">2.4.1.227</ecNumber>
    </recommendedName>
    <alternativeName>
        <fullName evidence="1">Undecaprenyl-PP-MurNAc-pentapeptide-UDPGlcNAc GlcNAc transferase 2</fullName>
    </alternativeName>
</protein>
<proteinExistence type="inferred from homology"/>
<gene>
    <name evidence="1" type="primary">murG2</name>
    <name type="ordered locus">BC_4249</name>
</gene>
<dbReference type="EC" id="2.4.1.227" evidence="1"/>
<dbReference type="EMBL" id="AE016877">
    <property type="protein sequence ID" value="AAP11164.1"/>
    <property type="molecule type" value="Genomic_DNA"/>
</dbReference>
<dbReference type="RefSeq" id="NP_833963.1">
    <property type="nucleotide sequence ID" value="NC_004722.1"/>
</dbReference>
<dbReference type="SMR" id="Q812T8"/>
<dbReference type="STRING" id="226900.BC_4249"/>
<dbReference type="CAZy" id="GT28">
    <property type="family name" value="Glycosyltransferase Family 28"/>
</dbReference>
<dbReference type="KEGG" id="bce:BC4249"/>
<dbReference type="PATRIC" id="fig|226900.8.peg.4393"/>
<dbReference type="HOGENOM" id="CLU_037404_0_0_9"/>
<dbReference type="OrthoDB" id="9808936at2"/>
<dbReference type="UniPathway" id="UPA00219"/>
<dbReference type="Proteomes" id="UP000001417">
    <property type="component" value="Chromosome"/>
</dbReference>
<dbReference type="GO" id="GO:0005886">
    <property type="term" value="C:plasma membrane"/>
    <property type="evidence" value="ECO:0007669"/>
    <property type="project" value="UniProtKB-SubCell"/>
</dbReference>
<dbReference type="GO" id="GO:0016757">
    <property type="term" value="F:glycosyltransferase activity"/>
    <property type="evidence" value="ECO:0000318"/>
    <property type="project" value="GO_Central"/>
</dbReference>
<dbReference type="GO" id="GO:0051991">
    <property type="term" value="F:UDP-N-acetyl-D-glucosamine:N-acetylmuramoyl-L-alanyl-D-glutamyl-meso-2,6-diaminopimelyl-D-alanyl-D-alanine-diphosphoundecaprenol 4-beta-N-acetylglucosaminlytransferase activity"/>
    <property type="evidence" value="ECO:0007669"/>
    <property type="project" value="RHEA"/>
</dbReference>
<dbReference type="GO" id="GO:0050511">
    <property type="term" value="F:undecaprenyldiphospho-muramoylpentapeptide beta-N-acetylglucosaminyltransferase activity"/>
    <property type="evidence" value="ECO:0007669"/>
    <property type="project" value="UniProtKB-UniRule"/>
</dbReference>
<dbReference type="GO" id="GO:0005975">
    <property type="term" value="P:carbohydrate metabolic process"/>
    <property type="evidence" value="ECO:0007669"/>
    <property type="project" value="InterPro"/>
</dbReference>
<dbReference type="GO" id="GO:0051301">
    <property type="term" value="P:cell division"/>
    <property type="evidence" value="ECO:0007669"/>
    <property type="project" value="UniProtKB-KW"/>
</dbReference>
<dbReference type="GO" id="GO:0071555">
    <property type="term" value="P:cell wall organization"/>
    <property type="evidence" value="ECO:0007669"/>
    <property type="project" value="UniProtKB-KW"/>
</dbReference>
<dbReference type="GO" id="GO:0030259">
    <property type="term" value="P:lipid glycosylation"/>
    <property type="evidence" value="ECO:0007669"/>
    <property type="project" value="UniProtKB-UniRule"/>
</dbReference>
<dbReference type="GO" id="GO:0009252">
    <property type="term" value="P:peptidoglycan biosynthetic process"/>
    <property type="evidence" value="ECO:0007669"/>
    <property type="project" value="UniProtKB-UniRule"/>
</dbReference>
<dbReference type="GO" id="GO:0008360">
    <property type="term" value="P:regulation of cell shape"/>
    <property type="evidence" value="ECO:0007669"/>
    <property type="project" value="UniProtKB-KW"/>
</dbReference>
<dbReference type="CDD" id="cd03785">
    <property type="entry name" value="GT28_MurG"/>
    <property type="match status" value="1"/>
</dbReference>
<dbReference type="Gene3D" id="3.40.50.2000">
    <property type="entry name" value="Glycogen Phosphorylase B"/>
    <property type="match status" value="2"/>
</dbReference>
<dbReference type="HAMAP" id="MF_00033">
    <property type="entry name" value="MurG"/>
    <property type="match status" value="1"/>
</dbReference>
<dbReference type="InterPro" id="IPR006009">
    <property type="entry name" value="GlcNAc_MurG"/>
</dbReference>
<dbReference type="InterPro" id="IPR007235">
    <property type="entry name" value="Glyco_trans_28_C"/>
</dbReference>
<dbReference type="InterPro" id="IPR004276">
    <property type="entry name" value="GlycoTrans_28_N"/>
</dbReference>
<dbReference type="NCBIfam" id="TIGR01133">
    <property type="entry name" value="murG"/>
    <property type="match status" value="1"/>
</dbReference>
<dbReference type="NCBIfam" id="NF009102">
    <property type="entry name" value="PRK12446.1"/>
    <property type="match status" value="1"/>
</dbReference>
<dbReference type="PANTHER" id="PTHR21015:SF27">
    <property type="entry name" value="UDP-N-ACETYLGLUCOSAMINE--N-ACETYLMURAMYL-(PENTAPEPTIDE) PYROPHOSPHORYL-UNDECAPRENOL N-ACETYLGLUCOSAMINE TRANSFERASE"/>
    <property type="match status" value="1"/>
</dbReference>
<dbReference type="PANTHER" id="PTHR21015">
    <property type="entry name" value="UDP-N-ACETYLGLUCOSAMINE--N-ACETYLMURAMYL-(PENTAPEPTIDE) PYROPHOSPHORYL-UNDECAPRENOL N-ACETYLGLUCOSAMINE TRANSFERASE 1"/>
    <property type="match status" value="1"/>
</dbReference>
<dbReference type="Pfam" id="PF04101">
    <property type="entry name" value="Glyco_tran_28_C"/>
    <property type="match status" value="1"/>
</dbReference>
<dbReference type="Pfam" id="PF03033">
    <property type="entry name" value="Glyco_transf_28"/>
    <property type="match status" value="1"/>
</dbReference>
<dbReference type="SUPFAM" id="SSF53756">
    <property type="entry name" value="UDP-Glycosyltransferase/glycogen phosphorylase"/>
    <property type="match status" value="1"/>
</dbReference>
<feature type="chain" id="PRO_0000109141" description="UDP-N-acetylglucosamine--N-acetylmuramyl-(pentapeptide) pyrophosphoryl-undecaprenol N-acetylglucosamine transferase 2">
    <location>
        <begin position="1"/>
        <end position="352"/>
    </location>
</feature>
<feature type="binding site" evidence="1">
    <location>
        <begin position="11"/>
        <end position="13"/>
    </location>
    <ligand>
        <name>UDP-N-acetyl-alpha-D-glucosamine</name>
        <dbReference type="ChEBI" id="CHEBI:57705"/>
    </ligand>
</feature>
<feature type="binding site" evidence="1">
    <location>
        <position position="164"/>
    </location>
    <ligand>
        <name>UDP-N-acetyl-alpha-D-glucosamine</name>
        <dbReference type="ChEBI" id="CHEBI:57705"/>
    </ligand>
</feature>
<feature type="binding site" evidence="1">
    <location>
        <position position="194"/>
    </location>
    <ligand>
        <name>UDP-N-acetyl-alpha-D-glucosamine</name>
        <dbReference type="ChEBI" id="CHEBI:57705"/>
    </ligand>
</feature>
<feature type="binding site" evidence="1">
    <location>
        <position position="289"/>
    </location>
    <ligand>
        <name>UDP-N-acetyl-alpha-D-glucosamine</name>
        <dbReference type="ChEBI" id="CHEBI:57705"/>
    </ligand>
</feature>
<comment type="function">
    <text evidence="1">Cell wall formation. Catalyzes the transfer of a GlcNAc subunit on undecaprenyl-pyrophosphoryl-MurNAc-pentapeptide (lipid intermediate I) to form undecaprenyl-pyrophosphoryl-MurNAc-(pentapeptide)GlcNAc (lipid intermediate II).</text>
</comment>
<comment type="catalytic activity">
    <reaction evidence="1">
        <text>di-trans,octa-cis-undecaprenyl diphospho-N-acetyl-alpha-D-muramoyl-L-alanyl-D-glutamyl-meso-2,6-diaminopimeloyl-D-alanyl-D-alanine + UDP-N-acetyl-alpha-D-glucosamine = di-trans,octa-cis-undecaprenyl diphospho-[N-acetyl-alpha-D-glucosaminyl-(1-&gt;4)]-N-acetyl-alpha-D-muramoyl-L-alanyl-D-glutamyl-meso-2,6-diaminopimeloyl-D-alanyl-D-alanine + UDP + H(+)</text>
        <dbReference type="Rhea" id="RHEA:31227"/>
        <dbReference type="ChEBI" id="CHEBI:15378"/>
        <dbReference type="ChEBI" id="CHEBI:57705"/>
        <dbReference type="ChEBI" id="CHEBI:58223"/>
        <dbReference type="ChEBI" id="CHEBI:61387"/>
        <dbReference type="ChEBI" id="CHEBI:61388"/>
        <dbReference type="EC" id="2.4.1.227"/>
    </reaction>
</comment>
<comment type="pathway">
    <text evidence="1">Cell wall biogenesis; peptidoglycan biosynthesis.</text>
</comment>
<comment type="subcellular location">
    <subcellularLocation>
        <location evidence="1">Cell membrane</location>
        <topology evidence="1">Peripheral membrane protein</topology>
        <orientation evidence="1">Cytoplasmic side</orientation>
    </subcellularLocation>
</comment>
<comment type="similarity">
    <text evidence="1">Belongs to the glycosyltransferase 28 family. MurG subfamily.</text>
</comment>
<accession>Q812T8</accession>